<protein>
    <recommendedName>
        <fullName evidence="1">Putative membrane protein insertion efficiency factor</fullName>
    </recommendedName>
</protein>
<evidence type="ECO:0000255" key="1">
    <source>
        <dbReference type="HAMAP-Rule" id="MF_00386"/>
    </source>
</evidence>
<dbReference type="EMBL" id="CP000413">
    <property type="protein sequence ID" value="ABJ60603.1"/>
    <property type="molecule type" value="Genomic_DNA"/>
</dbReference>
<dbReference type="GeneID" id="29640107"/>
<dbReference type="KEGG" id="lga:LGAS_1234"/>
<dbReference type="HOGENOM" id="CLU_144811_2_2_9"/>
<dbReference type="BioCyc" id="LGAS324831:G1G6Y-1229-MONOMER"/>
<dbReference type="Proteomes" id="UP000000664">
    <property type="component" value="Chromosome"/>
</dbReference>
<dbReference type="GO" id="GO:0005886">
    <property type="term" value="C:plasma membrane"/>
    <property type="evidence" value="ECO:0007669"/>
    <property type="project" value="UniProtKB-SubCell"/>
</dbReference>
<dbReference type="HAMAP" id="MF_00386">
    <property type="entry name" value="UPF0161_YidD"/>
    <property type="match status" value="1"/>
</dbReference>
<dbReference type="InterPro" id="IPR002696">
    <property type="entry name" value="Membr_insert_effic_factor_YidD"/>
</dbReference>
<dbReference type="NCBIfam" id="TIGR00278">
    <property type="entry name" value="membrane protein insertion efficiency factor YidD"/>
    <property type="match status" value="1"/>
</dbReference>
<dbReference type="PANTHER" id="PTHR33383">
    <property type="entry name" value="MEMBRANE PROTEIN INSERTION EFFICIENCY FACTOR-RELATED"/>
    <property type="match status" value="1"/>
</dbReference>
<dbReference type="PANTHER" id="PTHR33383:SF1">
    <property type="entry name" value="MEMBRANE PROTEIN INSERTION EFFICIENCY FACTOR-RELATED"/>
    <property type="match status" value="1"/>
</dbReference>
<dbReference type="Pfam" id="PF01809">
    <property type="entry name" value="YidD"/>
    <property type="match status" value="1"/>
</dbReference>
<dbReference type="SMART" id="SM01234">
    <property type="entry name" value="Haemolytic"/>
    <property type="match status" value="1"/>
</dbReference>
<accession>Q042L9</accession>
<comment type="function">
    <text evidence="1">Could be involved in insertion of integral membrane proteins into the membrane.</text>
</comment>
<comment type="subcellular location">
    <subcellularLocation>
        <location evidence="1">Cell membrane</location>
        <topology evidence="1">Peripheral membrane protein</topology>
        <orientation evidence="1">Cytoplasmic side</orientation>
    </subcellularLocation>
</comment>
<comment type="similarity">
    <text evidence="1">Belongs to the UPF0161 family.</text>
</comment>
<reference key="1">
    <citation type="journal article" date="2006" name="Proc. Natl. Acad. Sci. U.S.A.">
        <title>Comparative genomics of the lactic acid bacteria.</title>
        <authorList>
            <person name="Makarova K.S."/>
            <person name="Slesarev A."/>
            <person name="Wolf Y.I."/>
            <person name="Sorokin A."/>
            <person name="Mirkin B."/>
            <person name="Koonin E.V."/>
            <person name="Pavlov A."/>
            <person name="Pavlova N."/>
            <person name="Karamychev V."/>
            <person name="Polouchine N."/>
            <person name="Shakhova V."/>
            <person name="Grigoriev I."/>
            <person name="Lou Y."/>
            <person name="Rohksar D."/>
            <person name="Lucas S."/>
            <person name="Huang K."/>
            <person name="Goodstein D.M."/>
            <person name="Hawkins T."/>
            <person name="Plengvidhya V."/>
            <person name="Welker D."/>
            <person name="Hughes J."/>
            <person name="Goh Y."/>
            <person name="Benson A."/>
            <person name="Baldwin K."/>
            <person name="Lee J.-H."/>
            <person name="Diaz-Muniz I."/>
            <person name="Dosti B."/>
            <person name="Smeianov V."/>
            <person name="Wechter W."/>
            <person name="Barabote R."/>
            <person name="Lorca G."/>
            <person name="Altermann E."/>
            <person name="Barrangou R."/>
            <person name="Ganesan B."/>
            <person name="Xie Y."/>
            <person name="Rawsthorne H."/>
            <person name="Tamir D."/>
            <person name="Parker C."/>
            <person name="Breidt F."/>
            <person name="Broadbent J.R."/>
            <person name="Hutkins R."/>
            <person name="O'Sullivan D."/>
            <person name="Steele J."/>
            <person name="Unlu G."/>
            <person name="Saier M.H. Jr."/>
            <person name="Klaenhammer T."/>
            <person name="Richardson P."/>
            <person name="Kozyavkin S."/>
            <person name="Weimer B.C."/>
            <person name="Mills D.A."/>
        </authorList>
    </citation>
    <scope>NUCLEOTIDE SEQUENCE [LARGE SCALE GENOMIC DNA]</scope>
    <source>
        <strain>ATCC 33323 / DSM 20243 / BCRC 14619 / CIP 102991 / JCM 1131 / KCTC 3163 / NCIMB 11718 / NCTC 13722 / AM63</strain>
    </source>
</reference>
<feature type="chain" id="PRO_1000013095" description="Putative membrane protein insertion efficiency factor">
    <location>
        <begin position="1"/>
        <end position="97"/>
    </location>
</feature>
<organism>
    <name type="scientific">Lactobacillus gasseri (strain ATCC 33323 / DSM 20243 / BCRC 14619 / CIP 102991 / JCM 1131 / KCTC 3163 / NCIMB 11718 / NCTC 13722 / AM63)</name>
    <dbReference type="NCBI Taxonomy" id="324831"/>
    <lineage>
        <taxon>Bacteria</taxon>
        <taxon>Bacillati</taxon>
        <taxon>Bacillota</taxon>
        <taxon>Bacilli</taxon>
        <taxon>Lactobacillales</taxon>
        <taxon>Lactobacillaceae</taxon>
        <taxon>Lactobacillus</taxon>
    </lineage>
</organism>
<name>YIDD_LACGA</name>
<proteinExistence type="inferred from homology"/>
<keyword id="KW-1003">Cell membrane</keyword>
<keyword id="KW-0472">Membrane</keyword>
<gene>
    <name type="ordered locus">LGAS_1234</name>
</gene>
<sequence>MNKLLIGLVNVYKKFISPVLPPTCRYYPTCSTYMIDALKKHGAILGLIMGISRIIRCNPFIKGGVDPVPDYFTLRRNPHPERYEDEIIAQAFHSNKK</sequence>